<proteinExistence type="inferred from homology"/>
<gene>
    <name type="primary">cvfB</name>
    <name type="ordered locus">SERP0961</name>
</gene>
<feature type="chain" id="PRO_0000282299" description="Conserved virulence factor B">
    <location>
        <begin position="1"/>
        <end position="298"/>
    </location>
</feature>
<name>CVFB_STAEQ</name>
<sequence length="298" mass="33986">MALDKDIVGSIEFLEVVGLQGSTYLLKGPNDESVKLNQSEVADEDDFEIGEEYSFFVYPNRSGDLFATQNMPDITKDKYDFAKVIKTDRDGVHIDVGLPREVLVPWEDLPKLKELWPQAGDYLLVTLRIDSTNQMFGRLASETIVESMFTPVNDDSKQNEYISARAYRLLRVGSFLLSNEGYKIFVHESERKHEPRLGEEVEVRIIGHNEKGELNGSFLPLAHERLDDDGQVIFDLLVEYDGELPFWDKSSPDAIKEVFNMSKGSFKRAIGHLYKKKIINIETGKITLTKKGWSRVDD</sequence>
<evidence type="ECO:0000305" key="1"/>
<comment type="similarity">
    <text evidence="1">Belongs to the CvfB family.</text>
</comment>
<protein>
    <recommendedName>
        <fullName>Conserved virulence factor B</fullName>
    </recommendedName>
</protein>
<reference key="1">
    <citation type="journal article" date="2005" name="J. Bacteriol.">
        <title>Insights on evolution of virulence and resistance from the complete genome analysis of an early methicillin-resistant Staphylococcus aureus strain and a biofilm-producing methicillin-resistant Staphylococcus epidermidis strain.</title>
        <authorList>
            <person name="Gill S.R."/>
            <person name="Fouts D.E."/>
            <person name="Archer G.L."/>
            <person name="Mongodin E.F."/>
            <person name="DeBoy R.T."/>
            <person name="Ravel J."/>
            <person name="Paulsen I.T."/>
            <person name="Kolonay J.F."/>
            <person name="Brinkac L.M."/>
            <person name="Beanan M.J."/>
            <person name="Dodson R.J."/>
            <person name="Daugherty S.C."/>
            <person name="Madupu R."/>
            <person name="Angiuoli S.V."/>
            <person name="Durkin A.S."/>
            <person name="Haft D.H."/>
            <person name="Vamathevan J.J."/>
            <person name="Khouri H."/>
            <person name="Utterback T.R."/>
            <person name="Lee C."/>
            <person name="Dimitrov G."/>
            <person name="Jiang L."/>
            <person name="Qin H."/>
            <person name="Weidman J."/>
            <person name="Tran K."/>
            <person name="Kang K.H."/>
            <person name="Hance I.R."/>
            <person name="Nelson K.E."/>
            <person name="Fraser C.M."/>
        </authorList>
    </citation>
    <scope>NUCLEOTIDE SEQUENCE [LARGE SCALE GENOMIC DNA]</scope>
    <source>
        <strain>ATCC 35984 / DSM 28319 / BCRC 17069 / CCUG 31568 / BM 3577 / RP62A</strain>
    </source>
</reference>
<dbReference type="EMBL" id="CP000029">
    <property type="protein sequence ID" value="AAW54284.1"/>
    <property type="molecule type" value="Genomic_DNA"/>
</dbReference>
<dbReference type="RefSeq" id="WP_002446402.1">
    <property type="nucleotide sequence ID" value="NC_002976.3"/>
</dbReference>
<dbReference type="SMR" id="Q5HPF1"/>
<dbReference type="STRING" id="176279.SERP0961"/>
<dbReference type="KEGG" id="ser:SERP0961"/>
<dbReference type="eggNOG" id="COG2996">
    <property type="taxonomic scope" value="Bacteria"/>
</dbReference>
<dbReference type="HOGENOM" id="CLU_064885_0_0_9"/>
<dbReference type="Proteomes" id="UP000000531">
    <property type="component" value="Chromosome"/>
</dbReference>
<dbReference type="Gene3D" id="2.40.50.140">
    <property type="entry name" value="Nucleic acid-binding proteins"/>
    <property type="match status" value="2"/>
</dbReference>
<dbReference type="Gene3D" id="1.10.10.10">
    <property type="entry name" value="Winged helix-like DNA-binding domain superfamily/Winged helix DNA-binding domain"/>
    <property type="match status" value="1"/>
</dbReference>
<dbReference type="InterPro" id="IPR014464">
    <property type="entry name" value="CvfB_fam"/>
</dbReference>
<dbReference type="InterPro" id="IPR048588">
    <property type="entry name" value="CvfB_S1_2nd"/>
</dbReference>
<dbReference type="InterPro" id="IPR048587">
    <property type="entry name" value="CvfB_S1_3rd"/>
</dbReference>
<dbReference type="InterPro" id="IPR039566">
    <property type="entry name" value="CvfB_S1_st"/>
</dbReference>
<dbReference type="InterPro" id="IPR040764">
    <property type="entry name" value="CvfB_WH"/>
</dbReference>
<dbReference type="InterPro" id="IPR012340">
    <property type="entry name" value="NA-bd_OB-fold"/>
</dbReference>
<dbReference type="InterPro" id="IPR036388">
    <property type="entry name" value="WH-like_DNA-bd_sf"/>
</dbReference>
<dbReference type="PANTHER" id="PTHR37296">
    <property type="entry name" value="CONSERVED VIRULENCE FACTOR B"/>
    <property type="match status" value="1"/>
</dbReference>
<dbReference type="PANTHER" id="PTHR37296:SF1">
    <property type="entry name" value="CONSERVED VIRULENCE FACTOR B"/>
    <property type="match status" value="1"/>
</dbReference>
<dbReference type="Pfam" id="PF21191">
    <property type="entry name" value="CvfB_1st"/>
    <property type="match status" value="1"/>
</dbReference>
<dbReference type="Pfam" id="PF21543">
    <property type="entry name" value="CvfB_2nd"/>
    <property type="match status" value="1"/>
</dbReference>
<dbReference type="Pfam" id="PF17783">
    <property type="entry name" value="CvfB_WH"/>
    <property type="match status" value="1"/>
</dbReference>
<dbReference type="Pfam" id="PF13509">
    <property type="entry name" value="S1_2"/>
    <property type="match status" value="1"/>
</dbReference>
<dbReference type="PIRSF" id="PIRSF012524">
    <property type="entry name" value="YitL_S1"/>
    <property type="match status" value="1"/>
</dbReference>
<keyword id="KW-1185">Reference proteome</keyword>
<accession>Q5HPF1</accession>
<organism>
    <name type="scientific">Staphylococcus epidermidis (strain ATCC 35984 / DSM 28319 / BCRC 17069 / CCUG 31568 / BM 3577 / RP62A)</name>
    <dbReference type="NCBI Taxonomy" id="176279"/>
    <lineage>
        <taxon>Bacteria</taxon>
        <taxon>Bacillati</taxon>
        <taxon>Bacillota</taxon>
        <taxon>Bacilli</taxon>
        <taxon>Bacillales</taxon>
        <taxon>Staphylococcaceae</taxon>
        <taxon>Staphylococcus</taxon>
    </lineage>
</organism>